<name>RBL_DROLU</name>
<dbReference type="EC" id="4.1.1.39" evidence="1"/>
<dbReference type="EMBL" id="L01907">
    <property type="protein sequence ID" value="AAA16279.2"/>
    <property type="molecule type" value="Genomic_DNA"/>
</dbReference>
<dbReference type="SMR" id="P28408"/>
<dbReference type="GO" id="GO:0009507">
    <property type="term" value="C:chloroplast"/>
    <property type="evidence" value="ECO:0007669"/>
    <property type="project" value="UniProtKB-SubCell"/>
</dbReference>
<dbReference type="GO" id="GO:0000287">
    <property type="term" value="F:magnesium ion binding"/>
    <property type="evidence" value="ECO:0007669"/>
    <property type="project" value="InterPro"/>
</dbReference>
<dbReference type="GO" id="GO:0004497">
    <property type="term" value="F:monooxygenase activity"/>
    <property type="evidence" value="ECO:0007669"/>
    <property type="project" value="UniProtKB-KW"/>
</dbReference>
<dbReference type="GO" id="GO:0016984">
    <property type="term" value="F:ribulose-bisphosphate carboxylase activity"/>
    <property type="evidence" value="ECO:0007669"/>
    <property type="project" value="UniProtKB-EC"/>
</dbReference>
<dbReference type="GO" id="GO:0009853">
    <property type="term" value="P:photorespiration"/>
    <property type="evidence" value="ECO:0007669"/>
    <property type="project" value="UniProtKB-KW"/>
</dbReference>
<dbReference type="GO" id="GO:0019253">
    <property type="term" value="P:reductive pentose-phosphate cycle"/>
    <property type="evidence" value="ECO:0007669"/>
    <property type="project" value="UniProtKB-KW"/>
</dbReference>
<dbReference type="CDD" id="cd08212">
    <property type="entry name" value="RuBisCO_large_I"/>
    <property type="match status" value="1"/>
</dbReference>
<dbReference type="FunFam" id="3.20.20.110:FF:000001">
    <property type="entry name" value="Ribulose bisphosphate carboxylase large chain"/>
    <property type="match status" value="1"/>
</dbReference>
<dbReference type="FunFam" id="3.30.70.150:FF:000001">
    <property type="entry name" value="Ribulose bisphosphate carboxylase large chain"/>
    <property type="match status" value="1"/>
</dbReference>
<dbReference type="Gene3D" id="3.20.20.110">
    <property type="entry name" value="Ribulose bisphosphate carboxylase, large subunit, C-terminal domain"/>
    <property type="match status" value="1"/>
</dbReference>
<dbReference type="Gene3D" id="3.30.70.150">
    <property type="entry name" value="RuBisCO large subunit, N-terminal domain"/>
    <property type="match status" value="1"/>
</dbReference>
<dbReference type="HAMAP" id="MF_01338">
    <property type="entry name" value="RuBisCO_L_type1"/>
    <property type="match status" value="1"/>
</dbReference>
<dbReference type="InterPro" id="IPR033966">
    <property type="entry name" value="RuBisCO"/>
</dbReference>
<dbReference type="InterPro" id="IPR020878">
    <property type="entry name" value="RuBisCo_large_chain_AS"/>
</dbReference>
<dbReference type="InterPro" id="IPR000685">
    <property type="entry name" value="RuBisCO_lsu_C"/>
</dbReference>
<dbReference type="InterPro" id="IPR036376">
    <property type="entry name" value="RuBisCO_lsu_C_sf"/>
</dbReference>
<dbReference type="InterPro" id="IPR017443">
    <property type="entry name" value="RuBisCO_lsu_fd_N"/>
</dbReference>
<dbReference type="InterPro" id="IPR036422">
    <property type="entry name" value="RuBisCO_lsu_N_sf"/>
</dbReference>
<dbReference type="InterPro" id="IPR020888">
    <property type="entry name" value="RuBisCO_lsuI"/>
</dbReference>
<dbReference type="NCBIfam" id="NF003252">
    <property type="entry name" value="PRK04208.1"/>
    <property type="match status" value="1"/>
</dbReference>
<dbReference type="PANTHER" id="PTHR42704">
    <property type="entry name" value="RIBULOSE BISPHOSPHATE CARBOXYLASE"/>
    <property type="match status" value="1"/>
</dbReference>
<dbReference type="PANTHER" id="PTHR42704:SF16">
    <property type="entry name" value="RIBULOSE BISPHOSPHATE CARBOXYLASE LARGE CHAIN"/>
    <property type="match status" value="1"/>
</dbReference>
<dbReference type="Pfam" id="PF00016">
    <property type="entry name" value="RuBisCO_large"/>
    <property type="match status" value="1"/>
</dbReference>
<dbReference type="Pfam" id="PF02788">
    <property type="entry name" value="RuBisCO_large_N"/>
    <property type="match status" value="1"/>
</dbReference>
<dbReference type="SFLD" id="SFLDG01052">
    <property type="entry name" value="RuBisCO"/>
    <property type="match status" value="1"/>
</dbReference>
<dbReference type="SFLD" id="SFLDS00014">
    <property type="entry name" value="RuBisCO"/>
    <property type="match status" value="1"/>
</dbReference>
<dbReference type="SFLD" id="SFLDG00301">
    <property type="entry name" value="RuBisCO-like_proteins"/>
    <property type="match status" value="1"/>
</dbReference>
<dbReference type="SUPFAM" id="SSF51649">
    <property type="entry name" value="RuBisCo, C-terminal domain"/>
    <property type="match status" value="1"/>
</dbReference>
<dbReference type="SUPFAM" id="SSF54966">
    <property type="entry name" value="RuBisCO, large subunit, small (N-terminal) domain"/>
    <property type="match status" value="1"/>
</dbReference>
<dbReference type="PROSITE" id="PS00157">
    <property type="entry name" value="RUBISCO_LARGE"/>
    <property type="match status" value="1"/>
</dbReference>
<protein>
    <recommendedName>
        <fullName evidence="1">Ribulose bisphosphate carboxylase large chain</fullName>
        <shortName evidence="1">RuBisCO large subunit</shortName>
        <ecNumber evidence="1">4.1.1.39</ecNumber>
    </recommendedName>
</protein>
<gene>
    <name evidence="1" type="primary">rbcL</name>
</gene>
<organism>
    <name type="scientific">Drosophyllum lusitanicum</name>
    <name type="common">Portuguese sundew</name>
    <name type="synonym">Drosera lusitanica</name>
    <dbReference type="NCBI Taxonomy" id="4373"/>
    <lineage>
        <taxon>Eukaryota</taxon>
        <taxon>Viridiplantae</taxon>
        <taxon>Streptophyta</taxon>
        <taxon>Embryophyta</taxon>
        <taxon>Tracheophyta</taxon>
        <taxon>Spermatophyta</taxon>
        <taxon>Magnoliopsida</taxon>
        <taxon>eudicotyledons</taxon>
        <taxon>Gunneridae</taxon>
        <taxon>Pentapetalae</taxon>
        <taxon>Caryophyllales</taxon>
        <taxon>Drosophyllaceae</taxon>
        <taxon>Drosophyllum</taxon>
    </lineage>
</organism>
<accession>P28408</accession>
<keyword id="KW-0113">Calvin cycle</keyword>
<keyword id="KW-0120">Carbon dioxide fixation</keyword>
<keyword id="KW-0150">Chloroplast</keyword>
<keyword id="KW-1015">Disulfide bond</keyword>
<keyword id="KW-0456">Lyase</keyword>
<keyword id="KW-0460">Magnesium</keyword>
<keyword id="KW-0479">Metal-binding</keyword>
<keyword id="KW-0488">Methylation</keyword>
<keyword id="KW-0503">Monooxygenase</keyword>
<keyword id="KW-0560">Oxidoreductase</keyword>
<keyword id="KW-0601">Photorespiration</keyword>
<keyword id="KW-0602">Photosynthesis</keyword>
<keyword id="KW-0934">Plastid</keyword>
<evidence type="ECO:0000255" key="1">
    <source>
        <dbReference type="HAMAP-Rule" id="MF_01338"/>
    </source>
</evidence>
<reference key="1">
    <citation type="journal article" date="1992" name="Science">
        <title>Carnivorous plants: phylogeny and structural evolution.</title>
        <authorList>
            <person name="Albert V.A."/>
            <person name="Williams S.E."/>
            <person name="Chase M.W."/>
        </authorList>
    </citation>
    <scope>NUCLEOTIDE SEQUENCE [GENOMIC DNA]</scope>
</reference>
<geneLocation type="chloroplast"/>
<sequence>GVGFKAGVKDYKLTYYTPDYQTQDTDILAAFRVTPQPGVPPEEAGAAVAAESSTGTWTTVWTDGLTSLDRYKGRCYHIEPVAGEENQFIAYVAYPLDLFEEGSVTNMFTSIVGNVFGFKALRALRLEDLRIPPAYTKTFQGPPHGIQVERDKLNKYGRPLLGCTIKPKLGLSAKNYGRAVYECLRGGLDFTKDDENVNSQPFMRWRDRFLFCAEAIYKAQAETGEIKGHYLNATAGTCEEMIKRAVFARELGVPIVMHDYLTGGFTANTSLAHYCRDNGLLLHIHRAMHAVIDRQKNHGIHFRVLAKALRLSGGDHIHSGTVVGKLEGEREITLGFVDLLRDDNTEKDRSRGIYFTQSWVSLPGVLPVASGGIHVWHMPALTEIFGDDSVLQFGGGTLGHPWGNPPGAVANRVALEACVQARNEGRDLAREGNEIIREASKWSPELAAACEVWKEIKFEFPAMDTL</sequence>
<comment type="function">
    <text evidence="1">RuBisCO catalyzes two reactions: the carboxylation of D-ribulose 1,5-bisphosphate, the primary event in carbon dioxide fixation, as well as the oxidative fragmentation of the pentose substrate in the photorespiration process. Both reactions occur simultaneously and in competition at the same active site.</text>
</comment>
<comment type="catalytic activity">
    <reaction evidence="1">
        <text>2 (2R)-3-phosphoglycerate + 2 H(+) = D-ribulose 1,5-bisphosphate + CO2 + H2O</text>
        <dbReference type="Rhea" id="RHEA:23124"/>
        <dbReference type="ChEBI" id="CHEBI:15377"/>
        <dbReference type="ChEBI" id="CHEBI:15378"/>
        <dbReference type="ChEBI" id="CHEBI:16526"/>
        <dbReference type="ChEBI" id="CHEBI:57870"/>
        <dbReference type="ChEBI" id="CHEBI:58272"/>
        <dbReference type="EC" id="4.1.1.39"/>
    </reaction>
</comment>
<comment type="catalytic activity">
    <reaction evidence="1">
        <text>D-ribulose 1,5-bisphosphate + O2 = 2-phosphoglycolate + (2R)-3-phosphoglycerate + 2 H(+)</text>
        <dbReference type="Rhea" id="RHEA:36631"/>
        <dbReference type="ChEBI" id="CHEBI:15378"/>
        <dbReference type="ChEBI" id="CHEBI:15379"/>
        <dbReference type="ChEBI" id="CHEBI:57870"/>
        <dbReference type="ChEBI" id="CHEBI:58033"/>
        <dbReference type="ChEBI" id="CHEBI:58272"/>
    </reaction>
</comment>
<comment type="cofactor">
    <cofactor evidence="1">
        <name>Mg(2+)</name>
        <dbReference type="ChEBI" id="CHEBI:18420"/>
    </cofactor>
    <text evidence="1">Binds 1 Mg(2+) ion per subunit.</text>
</comment>
<comment type="subunit">
    <text evidence="1">Heterohexadecamer of 8 large chains and 8 small chains; disulfide-linked. The disulfide link is formed within the large subunit homodimers.</text>
</comment>
<comment type="subcellular location">
    <subcellularLocation>
        <location>Plastid</location>
        <location>Chloroplast</location>
    </subcellularLocation>
</comment>
<comment type="PTM">
    <text evidence="1">The disulfide bond which can form in the large chain dimeric partners within the hexadecamer appears to be associated with oxidative stress and protein turnover.</text>
</comment>
<comment type="miscellaneous">
    <text evidence="1">The basic functional RuBisCO is composed of a large chain homodimer in a 'head-to-tail' conformation. In form I RuBisCO this homodimer is arranged in a barrel-like tetramer with the small subunits forming a tetrameric 'cap' on each end of the 'barrel'.</text>
</comment>
<comment type="similarity">
    <text evidence="1">Belongs to the RuBisCO large chain family. Type I subfamily.</text>
</comment>
<feature type="chain" id="PRO_0000062451" description="Ribulose bisphosphate carboxylase large chain">
    <location>
        <begin position="1" status="less than"/>
        <end position="466"/>
    </location>
</feature>
<feature type="active site" description="Proton acceptor" evidence="1">
    <location>
        <position position="166"/>
    </location>
</feature>
<feature type="active site" description="Proton acceptor" evidence="1">
    <location>
        <position position="285"/>
    </location>
</feature>
<feature type="binding site" description="in homodimeric partner" evidence="1">
    <location>
        <position position="114"/>
    </location>
    <ligand>
        <name>substrate</name>
    </ligand>
</feature>
<feature type="binding site" evidence="1">
    <location>
        <position position="164"/>
    </location>
    <ligand>
        <name>substrate</name>
    </ligand>
</feature>
<feature type="binding site" evidence="1">
    <location>
        <position position="168"/>
    </location>
    <ligand>
        <name>substrate</name>
    </ligand>
</feature>
<feature type="binding site" description="via carbamate group" evidence="1">
    <location>
        <position position="192"/>
    </location>
    <ligand>
        <name>Mg(2+)</name>
        <dbReference type="ChEBI" id="CHEBI:18420"/>
    </ligand>
</feature>
<feature type="binding site" evidence="1">
    <location>
        <position position="194"/>
    </location>
    <ligand>
        <name>Mg(2+)</name>
        <dbReference type="ChEBI" id="CHEBI:18420"/>
    </ligand>
</feature>
<feature type="binding site" evidence="1">
    <location>
        <position position="195"/>
    </location>
    <ligand>
        <name>Mg(2+)</name>
        <dbReference type="ChEBI" id="CHEBI:18420"/>
    </ligand>
</feature>
<feature type="binding site" evidence="1">
    <location>
        <position position="286"/>
    </location>
    <ligand>
        <name>substrate</name>
    </ligand>
</feature>
<feature type="binding site" evidence="1">
    <location>
        <position position="318"/>
    </location>
    <ligand>
        <name>substrate</name>
    </ligand>
</feature>
<feature type="binding site" evidence="1">
    <location>
        <position position="370"/>
    </location>
    <ligand>
        <name>substrate</name>
    </ligand>
</feature>
<feature type="site" description="Transition state stabilizer" evidence="1">
    <location>
        <position position="325"/>
    </location>
</feature>
<feature type="modified residue" description="N6,N6,N6-trimethyllysine" evidence="1">
    <location>
        <position position="5"/>
    </location>
</feature>
<feature type="modified residue" description="N6-carboxylysine" evidence="1">
    <location>
        <position position="192"/>
    </location>
</feature>
<feature type="disulfide bond" description="Interchain; in linked form" evidence="1">
    <location>
        <position position="238"/>
    </location>
</feature>
<feature type="non-terminal residue">
    <location>
        <position position="1"/>
    </location>
</feature>
<proteinExistence type="inferred from homology"/>